<keyword id="KW-0049">Antioxidant</keyword>
<keyword id="KW-0963">Cytoplasm</keyword>
<keyword id="KW-0903">Direct protein sequencing</keyword>
<keyword id="KW-0539">Nucleus</keyword>
<keyword id="KW-0560">Oxidoreductase</keyword>
<keyword id="KW-0575">Peroxidase</keyword>
<keyword id="KW-0676">Redox-active center</keyword>
<keyword id="KW-1185">Reference proteome</keyword>
<evidence type="ECO:0000250" key="1">
    <source>
        <dbReference type="UniProtKB" id="O04005"/>
    </source>
</evidence>
<evidence type="ECO:0000250" key="2">
    <source>
        <dbReference type="UniProtKB" id="O35244"/>
    </source>
</evidence>
<evidence type="ECO:0000250" key="3">
    <source>
        <dbReference type="UniProtKB" id="P30041"/>
    </source>
</evidence>
<evidence type="ECO:0000255" key="4"/>
<evidence type="ECO:0000255" key="5">
    <source>
        <dbReference type="PROSITE-ProRule" id="PRU00691"/>
    </source>
</evidence>
<evidence type="ECO:0000305" key="6"/>
<accession>P0C5D1</accession>
<accession>A2YP42</accession>
<accession>B7ELX7</accession>
<accession>Q8GVG9</accession>
<comment type="function">
    <text evidence="1 3">Thiol-specific peroxidase that catalyzes the reduction of hydrogen peroxide and organic hydroperoxides to water and alcohols, respectively (By similarity). Seems to contribute to the inhibition of germination during stress (By similarity).</text>
</comment>
<comment type="catalytic activity">
    <reaction evidence="3">
        <text>a hydroperoxide + [thioredoxin]-dithiol = an alcohol + [thioredoxin]-disulfide + H2O</text>
        <dbReference type="Rhea" id="RHEA:62620"/>
        <dbReference type="Rhea" id="RHEA-COMP:10698"/>
        <dbReference type="Rhea" id="RHEA-COMP:10700"/>
        <dbReference type="ChEBI" id="CHEBI:15377"/>
        <dbReference type="ChEBI" id="CHEBI:29950"/>
        <dbReference type="ChEBI" id="CHEBI:30879"/>
        <dbReference type="ChEBI" id="CHEBI:35924"/>
        <dbReference type="ChEBI" id="CHEBI:50058"/>
        <dbReference type="EC" id="1.11.1.24"/>
    </reaction>
</comment>
<comment type="subcellular location">
    <subcellularLocation>
        <location evidence="1">Nucleus</location>
    </subcellularLocation>
    <subcellularLocation>
        <location evidence="1">Cytoplasm</location>
    </subcellularLocation>
</comment>
<comment type="miscellaneous">
    <text evidence="2">The active site is a conserved redox-active cysteine residue, the peroxidatic cysteine (C(P)), which makes the nucleophilic attack on the peroxide substrate. The peroxide oxidizes the C(P)-SH to cysteine sulfenic acid (C(P)-SOH), which then reacts with another cysteine residue, the resolving cysteine (C(R)), to form a disulfide bridge. The disulfide is subsequently reduced by an appropriate electron donor to complete the catalytic cycle. In this 1-Cys peroxiredoxin, no C(R) is present and C(P) instead forms a disulfide with a cysteine from another protein or with a small thiol molecule.</text>
</comment>
<comment type="similarity">
    <text evidence="6">Belongs to the peroxiredoxin family. Prx6 subfamily.</text>
</comment>
<reference key="1">
    <citation type="journal article" date="2005" name="Nature">
        <title>The map-based sequence of the rice genome.</title>
        <authorList>
            <consortium name="International rice genome sequencing project (IRGSP)"/>
        </authorList>
    </citation>
    <scope>NUCLEOTIDE SEQUENCE [LARGE SCALE GENOMIC DNA]</scope>
    <source>
        <strain>cv. Nipponbare</strain>
    </source>
</reference>
<reference key="2">
    <citation type="journal article" date="2008" name="Nucleic Acids Res.">
        <title>The rice annotation project database (RAP-DB): 2008 update.</title>
        <authorList>
            <consortium name="The rice annotation project (RAP)"/>
        </authorList>
    </citation>
    <scope>GENOME REANNOTATION</scope>
    <source>
        <strain>cv. Nipponbare</strain>
    </source>
</reference>
<reference key="3">
    <citation type="journal article" date="2013" name="Rice">
        <title>Improvement of the Oryza sativa Nipponbare reference genome using next generation sequence and optical map data.</title>
        <authorList>
            <person name="Kawahara Y."/>
            <person name="de la Bastide M."/>
            <person name="Hamilton J.P."/>
            <person name="Kanamori H."/>
            <person name="McCombie W.R."/>
            <person name="Ouyang S."/>
            <person name="Schwartz D.C."/>
            <person name="Tanaka T."/>
            <person name="Wu J."/>
            <person name="Zhou S."/>
            <person name="Childs K.L."/>
            <person name="Davidson R.M."/>
            <person name="Lin H."/>
            <person name="Quesada-Ocampo L."/>
            <person name="Vaillancourt B."/>
            <person name="Sakai H."/>
            <person name="Lee S.S."/>
            <person name="Kim J."/>
            <person name="Numa H."/>
            <person name="Itoh T."/>
            <person name="Buell C.R."/>
            <person name="Matsumoto T."/>
        </authorList>
    </citation>
    <scope>GENOME REANNOTATION</scope>
    <source>
        <strain>cv. Nipponbare</strain>
    </source>
</reference>
<reference key="4">
    <citation type="journal article" date="2005" name="PLoS Biol.">
        <title>The genomes of Oryza sativa: a history of duplications.</title>
        <authorList>
            <person name="Yu J."/>
            <person name="Wang J."/>
            <person name="Lin W."/>
            <person name="Li S."/>
            <person name="Li H."/>
            <person name="Zhou J."/>
            <person name="Ni P."/>
            <person name="Dong W."/>
            <person name="Hu S."/>
            <person name="Zeng C."/>
            <person name="Zhang J."/>
            <person name="Zhang Y."/>
            <person name="Li R."/>
            <person name="Xu Z."/>
            <person name="Li S."/>
            <person name="Li X."/>
            <person name="Zheng H."/>
            <person name="Cong L."/>
            <person name="Lin L."/>
            <person name="Yin J."/>
            <person name="Geng J."/>
            <person name="Li G."/>
            <person name="Shi J."/>
            <person name="Liu J."/>
            <person name="Lv H."/>
            <person name="Li J."/>
            <person name="Wang J."/>
            <person name="Deng Y."/>
            <person name="Ran L."/>
            <person name="Shi X."/>
            <person name="Wang X."/>
            <person name="Wu Q."/>
            <person name="Li C."/>
            <person name="Ren X."/>
            <person name="Wang J."/>
            <person name="Wang X."/>
            <person name="Li D."/>
            <person name="Liu D."/>
            <person name="Zhang X."/>
            <person name="Ji Z."/>
            <person name="Zhao W."/>
            <person name="Sun Y."/>
            <person name="Zhang Z."/>
            <person name="Bao J."/>
            <person name="Han Y."/>
            <person name="Dong L."/>
            <person name="Ji J."/>
            <person name="Chen P."/>
            <person name="Wu S."/>
            <person name="Liu J."/>
            <person name="Xiao Y."/>
            <person name="Bu D."/>
            <person name="Tan J."/>
            <person name="Yang L."/>
            <person name="Ye C."/>
            <person name="Zhang J."/>
            <person name="Xu J."/>
            <person name="Zhou Y."/>
            <person name="Yu Y."/>
            <person name="Zhang B."/>
            <person name="Zhuang S."/>
            <person name="Wei H."/>
            <person name="Liu B."/>
            <person name="Lei M."/>
            <person name="Yu H."/>
            <person name="Li Y."/>
            <person name="Xu H."/>
            <person name="Wei S."/>
            <person name="He X."/>
            <person name="Fang L."/>
            <person name="Zhang Z."/>
            <person name="Zhang Y."/>
            <person name="Huang X."/>
            <person name="Su Z."/>
            <person name="Tong W."/>
            <person name="Li J."/>
            <person name="Tong Z."/>
            <person name="Li S."/>
            <person name="Ye J."/>
            <person name="Wang L."/>
            <person name="Fang L."/>
            <person name="Lei T."/>
            <person name="Chen C.-S."/>
            <person name="Chen H.-C."/>
            <person name="Xu Z."/>
            <person name="Li H."/>
            <person name="Huang H."/>
            <person name="Zhang F."/>
            <person name="Xu H."/>
            <person name="Li N."/>
            <person name="Zhao C."/>
            <person name="Li S."/>
            <person name="Dong L."/>
            <person name="Huang Y."/>
            <person name="Li L."/>
            <person name="Xi Y."/>
            <person name="Qi Q."/>
            <person name="Li W."/>
            <person name="Zhang B."/>
            <person name="Hu W."/>
            <person name="Zhang Y."/>
            <person name="Tian X."/>
            <person name="Jiao Y."/>
            <person name="Liang X."/>
            <person name="Jin J."/>
            <person name="Gao L."/>
            <person name="Zheng W."/>
            <person name="Hao B."/>
            <person name="Liu S.-M."/>
            <person name="Wang W."/>
            <person name="Yuan L."/>
            <person name="Cao M."/>
            <person name="McDermott J."/>
            <person name="Samudrala R."/>
            <person name="Wang J."/>
            <person name="Wong G.K.-S."/>
            <person name="Yang H."/>
        </authorList>
    </citation>
    <scope>NUCLEOTIDE SEQUENCE [LARGE SCALE GENOMIC DNA]</scope>
    <source>
        <strain>cv. Nipponbare</strain>
    </source>
</reference>
<reference key="5">
    <citation type="journal article" date="2003" name="Science">
        <title>Collection, mapping, and annotation of over 28,000 cDNA clones from japonica rice.</title>
        <authorList>
            <consortium name="The rice full-length cDNA consortium"/>
        </authorList>
    </citation>
    <scope>NUCLEOTIDE SEQUENCE [LARGE SCALE MRNA]</scope>
    <source>
        <strain>cv. Nipponbare</strain>
    </source>
</reference>
<reference key="6">
    <citation type="journal article" date="2006" name="Proteomics">
        <title>Proteomic analysis of rice leaf, stem and root tissues during growth course.</title>
        <authorList>
            <person name="Nozu Y."/>
            <person name="Tsugita A."/>
            <person name="Kamijo K."/>
        </authorList>
    </citation>
    <scope>PROTEIN SEQUENCE [LARGE SCALE ANALYSIS] OF 2-8</scope>
    <scope>IDENTIFICATION BY MASS SPECTROMETRY</scope>
    <source>
        <strain>cv. Nipponbare</strain>
    </source>
</reference>
<protein>
    <recommendedName>
        <fullName>1-Cys peroxiredoxin B</fullName>
        <shortName>1-Cys Prx B</shortName>
        <ecNumber evidence="3">1.11.1.24</ecNumber>
    </recommendedName>
    <alternativeName>
        <fullName>Thioredoxin peroxidase B</fullName>
    </alternativeName>
    <alternativeName>
        <fullName evidence="6">Thioredoxin-dependent peroxiredoxin B</fullName>
    </alternativeName>
</protein>
<organism>
    <name type="scientific">Oryza sativa subsp. japonica</name>
    <name type="common">Rice</name>
    <dbReference type="NCBI Taxonomy" id="39947"/>
    <lineage>
        <taxon>Eukaryota</taxon>
        <taxon>Viridiplantae</taxon>
        <taxon>Streptophyta</taxon>
        <taxon>Embryophyta</taxon>
        <taxon>Tracheophyta</taxon>
        <taxon>Spermatophyta</taxon>
        <taxon>Magnoliopsida</taxon>
        <taxon>Liliopsida</taxon>
        <taxon>Poales</taxon>
        <taxon>Poaceae</taxon>
        <taxon>BOP clade</taxon>
        <taxon>Oryzoideae</taxon>
        <taxon>Oryzeae</taxon>
        <taxon>Oryzinae</taxon>
        <taxon>Oryza</taxon>
        <taxon>Oryza sativa</taxon>
    </lineage>
</organism>
<dbReference type="EC" id="1.11.1.24" evidence="3"/>
<dbReference type="EMBL" id="AP005292">
    <property type="protein sequence ID" value="BAC45198.1"/>
    <property type="molecule type" value="Genomic_DNA"/>
</dbReference>
<dbReference type="EMBL" id="AP008213">
    <property type="protein sequence ID" value="BAF22322.1"/>
    <property type="molecule type" value="Genomic_DNA"/>
</dbReference>
<dbReference type="EMBL" id="AP014963">
    <property type="protein sequence ID" value="BAT02839.1"/>
    <property type="molecule type" value="Genomic_DNA"/>
</dbReference>
<dbReference type="EMBL" id="CM000144">
    <property type="protein sequence ID" value="EAZ40815.1"/>
    <property type="molecule type" value="Genomic_DNA"/>
</dbReference>
<dbReference type="EMBL" id="AK073273">
    <property type="protein sequence ID" value="BAG93374.1"/>
    <property type="molecule type" value="mRNA"/>
</dbReference>
<dbReference type="EMBL" id="AK104089">
    <property type="protein sequence ID" value="BAG96405.1"/>
    <property type="molecule type" value="mRNA"/>
</dbReference>
<dbReference type="RefSeq" id="XP_015645187.1">
    <property type="nucleotide sequence ID" value="XM_015789701.1"/>
</dbReference>
<dbReference type="SMR" id="P0C5D1"/>
<dbReference type="FunCoup" id="P0C5D1">
    <property type="interactions" value="1322"/>
</dbReference>
<dbReference type="STRING" id="39947.P0C5D1"/>
<dbReference type="PeroxiBase" id="4024">
    <property type="entry name" value="Os1CysPrx02"/>
</dbReference>
<dbReference type="PaxDb" id="39947-P0C5D1"/>
<dbReference type="EnsemblPlants" id="Os07t0638400-01">
    <property type="protein sequence ID" value="Os07t0638400-01"/>
    <property type="gene ID" value="Os07g0638400"/>
</dbReference>
<dbReference type="Gramene" id="Os07t0638400-01">
    <property type="protein sequence ID" value="Os07t0638400-01"/>
    <property type="gene ID" value="Os07g0638400"/>
</dbReference>
<dbReference type="KEGG" id="dosa:Os07g0638400"/>
<dbReference type="eggNOG" id="KOG0854">
    <property type="taxonomic scope" value="Eukaryota"/>
</dbReference>
<dbReference type="HOGENOM" id="CLU_042529_4_1_1"/>
<dbReference type="InParanoid" id="P0C5D1"/>
<dbReference type="OMA" id="RLTMLYP"/>
<dbReference type="OrthoDB" id="2996783at2759"/>
<dbReference type="Proteomes" id="UP000000763">
    <property type="component" value="Chromosome 7"/>
</dbReference>
<dbReference type="Proteomes" id="UP000007752">
    <property type="component" value="Chromosome 7"/>
</dbReference>
<dbReference type="Proteomes" id="UP000059680">
    <property type="component" value="Chromosome 7"/>
</dbReference>
<dbReference type="GO" id="GO:0005829">
    <property type="term" value="C:cytosol"/>
    <property type="evidence" value="ECO:0000318"/>
    <property type="project" value="GO_Central"/>
</dbReference>
<dbReference type="GO" id="GO:0005634">
    <property type="term" value="C:nucleus"/>
    <property type="evidence" value="ECO:0007669"/>
    <property type="project" value="UniProtKB-SubCell"/>
</dbReference>
<dbReference type="GO" id="GO:0004601">
    <property type="term" value="F:peroxidase activity"/>
    <property type="evidence" value="ECO:0000318"/>
    <property type="project" value="GO_Central"/>
</dbReference>
<dbReference type="GO" id="GO:0140824">
    <property type="term" value="F:thioredoxin-dependent peroxiredoxin activity"/>
    <property type="evidence" value="ECO:0007669"/>
    <property type="project" value="UniProtKB-EC"/>
</dbReference>
<dbReference type="GO" id="GO:0045454">
    <property type="term" value="P:cell redox homeostasis"/>
    <property type="evidence" value="ECO:0000318"/>
    <property type="project" value="GO_Central"/>
</dbReference>
<dbReference type="CDD" id="cd03016">
    <property type="entry name" value="PRX_1cys"/>
    <property type="match status" value="1"/>
</dbReference>
<dbReference type="FunFam" id="3.30.1020.10:FF:000001">
    <property type="entry name" value="1-Cys peroxiredoxin"/>
    <property type="match status" value="1"/>
</dbReference>
<dbReference type="FunFam" id="3.40.30.10:FF:000011">
    <property type="entry name" value="Peroxiredoxin PRX1"/>
    <property type="match status" value="1"/>
</dbReference>
<dbReference type="Gene3D" id="3.30.1020.10">
    <property type="entry name" value="Antioxidant, Horf6, Chain A, domain2"/>
    <property type="match status" value="1"/>
</dbReference>
<dbReference type="Gene3D" id="3.40.30.10">
    <property type="entry name" value="Glutaredoxin"/>
    <property type="match status" value="1"/>
</dbReference>
<dbReference type="InterPro" id="IPR000866">
    <property type="entry name" value="AhpC/TSA"/>
</dbReference>
<dbReference type="InterPro" id="IPR024706">
    <property type="entry name" value="Peroxiredoxin_AhpC-typ"/>
</dbReference>
<dbReference type="InterPro" id="IPR019479">
    <property type="entry name" value="Peroxiredoxin_C"/>
</dbReference>
<dbReference type="InterPro" id="IPR045020">
    <property type="entry name" value="PRX_1cys"/>
</dbReference>
<dbReference type="InterPro" id="IPR036249">
    <property type="entry name" value="Thioredoxin-like_sf"/>
</dbReference>
<dbReference type="InterPro" id="IPR013766">
    <property type="entry name" value="Thioredoxin_domain"/>
</dbReference>
<dbReference type="PANTHER" id="PTHR43503">
    <property type="entry name" value="MCG48959-RELATED"/>
    <property type="match status" value="1"/>
</dbReference>
<dbReference type="PANTHER" id="PTHR43503:SF4">
    <property type="entry name" value="PEROXIREDOXIN-6"/>
    <property type="match status" value="1"/>
</dbReference>
<dbReference type="Pfam" id="PF10417">
    <property type="entry name" value="1-cysPrx_C"/>
    <property type="match status" value="1"/>
</dbReference>
<dbReference type="Pfam" id="PF00578">
    <property type="entry name" value="AhpC-TSA"/>
    <property type="match status" value="1"/>
</dbReference>
<dbReference type="PIRSF" id="PIRSF000239">
    <property type="entry name" value="AHPC"/>
    <property type="match status" value="1"/>
</dbReference>
<dbReference type="SUPFAM" id="SSF52833">
    <property type="entry name" value="Thioredoxin-like"/>
    <property type="match status" value="1"/>
</dbReference>
<dbReference type="PROSITE" id="PS51352">
    <property type="entry name" value="THIOREDOXIN_2"/>
    <property type="match status" value="1"/>
</dbReference>
<sequence>MPGLTLGDVVPDLELDTTHGKIRLHDFVGDAYVIIFSHPADFTPVCTTELSEMAGYAGEFDKRGVKLLGFSCDDVESHKDWIKDIEAYKPGRRVGFPIVADPDREAIRQLNMIDADEKDTAGGELPNRALHIVGPDKKVKLSFLFPACTGRNMAEVLRATDALLTAARHRVATPVNWKPGERVVIPPGVSDEEAKARFPAGFETAQLPSNKCYLRFTQVD</sequence>
<gene>
    <name type="ordered locus">Os07g0638400</name>
    <name type="ordered locus">LOC_Os07g44440</name>
    <name type="ORF">OJ1340_C08.108</name>
    <name type="ORF">OsJ_024298</name>
</gene>
<name>REHYB_ORYSJ</name>
<feature type="chain" id="PRO_0000285103" description="1-Cys peroxiredoxin B">
    <location>
        <begin position="1"/>
        <end position="220"/>
    </location>
</feature>
<feature type="domain" description="Thioredoxin" evidence="5">
    <location>
        <begin position="4"/>
        <end position="165"/>
    </location>
</feature>
<feature type="short sequence motif" description="Bipartite nuclear localization signal" evidence="4">
    <location>
        <begin position="195"/>
        <end position="218"/>
    </location>
</feature>
<feature type="active site" description="Cysteine sulfenic acid (-SOH) intermediate" evidence="3">
    <location>
        <position position="46"/>
    </location>
</feature>
<proteinExistence type="evidence at protein level"/>